<reference key="1">
    <citation type="journal article" date="2007" name="Proc. Natl. Acad. Sci. U.S.A.">
        <title>Deep-sea vent epsilon-proteobacterial genomes provide insights into emergence of pathogens.</title>
        <authorList>
            <person name="Nakagawa S."/>
            <person name="Takaki Y."/>
            <person name="Shimamura S."/>
            <person name="Reysenbach A.-L."/>
            <person name="Takai K."/>
            <person name="Horikoshi K."/>
        </authorList>
    </citation>
    <scope>NUCLEOTIDE SEQUENCE [LARGE SCALE GENOMIC DNA]</scope>
    <source>
        <strain>NBC37-1</strain>
    </source>
</reference>
<proteinExistence type="inferred from homology"/>
<protein>
    <recommendedName>
        <fullName evidence="1">Small ribosomal subunit protein uS10</fullName>
    </recommendedName>
    <alternativeName>
        <fullName evidence="2">30S ribosomal protein S10</fullName>
    </alternativeName>
</protein>
<evidence type="ECO:0000255" key="1">
    <source>
        <dbReference type="HAMAP-Rule" id="MF_00508"/>
    </source>
</evidence>
<evidence type="ECO:0000305" key="2"/>
<gene>
    <name evidence="1" type="primary">rpsJ</name>
    <name type="ordered locus">SUN_2320</name>
</gene>
<feature type="chain" id="PRO_1000015126" description="Small ribosomal subunit protein uS10">
    <location>
        <begin position="1"/>
        <end position="103"/>
    </location>
</feature>
<sequence length="103" mass="11799">MEKIRLKLKAYDHRVLDRSVAAIVDAVKRTGAEIRGPIPMPTKMKRYTVLKSPHVNKDAREQFEIRIHGRMIDIVSATSDTIDSLMKLDLAPEIEVEIRSMDK</sequence>
<comment type="function">
    <text evidence="1">Involved in the binding of tRNA to the ribosomes.</text>
</comment>
<comment type="subunit">
    <text evidence="1">Part of the 30S ribosomal subunit.</text>
</comment>
<comment type="similarity">
    <text evidence="1">Belongs to the universal ribosomal protein uS10 family.</text>
</comment>
<keyword id="KW-0687">Ribonucleoprotein</keyword>
<keyword id="KW-0689">Ribosomal protein</keyword>
<organism>
    <name type="scientific">Sulfurovum sp. (strain NBC37-1)</name>
    <dbReference type="NCBI Taxonomy" id="387093"/>
    <lineage>
        <taxon>Bacteria</taxon>
        <taxon>Pseudomonadati</taxon>
        <taxon>Campylobacterota</taxon>
        <taxon>Epsilonproteobacteria</taxon>
        <taxon>Campylobacterales</taxon>
        <taxon>Sulfurovaceae</taxon>
        <taxon>Sulfurovum</taxon>
    </lineage>
</organism>
<accession>A6QCP7</accession>
<dbReference type="EMBL" id="AP009179">
    <property type="protein sequence ID" value="BAF73256.1"/>
    <property type="molecule type" value="Genomic_DNA"/>
</dbReference>
<dbReference type="RefSeq" id="WP_012084095.1">
    <property type="nucleotide sequence ID" value="NC_009663.1"/>
</dbReference>
<dbReference type="SMR" id="A6QCP7"/>
<dbReference type="STRING" id="387093.SUN_2320"/>
<dbReference type="KEGG" id="sun:SUN_2320"/>
<dbReference type="eggNOG" id="COG0051">
    <property type="taxonomic scope" value="Bacteria"/>
</dbReference>
<dbReference type="HOGENOM" id="CLU_122625_1_2_7"/>
<dbReference type="OrthoDB" id="9804464at2"/>
<dbReference type="Proteomes" id="UP000006378">
    <property type="component" value="Chromosome"/>
</dbReference>
<dbReference type="GO" id="GO:1990904">
    <property type="term" value="C:ribonucleoprotein complex"/>
    <property type="evidence" value="ECO:0007669"/>
    <property type="project" value="UniProtKB-KW"/>
</dbReference>
<dbReference type="GO" id="GO:0005840">
    <property type="term" value="C:ribosome"/>
    <property type="evidence" value="ECO:0007669"/>
    <property type="project" value="UniProtKB-KW"/>
</dbReference>
<dbReference type="GO" id="GO:0003735">
    <property type="term" value="F:structural constituent of ribosome"/>
    <property type="evidence" value="ECO:0007669"/>
    <property type="project" value="InterPro"/>
</dbReference>
<dbReference type="GO" id="GO:0000049">
    <property type="term" value="F:tRNA binding"/>
    <property type="evidence" value="ECO:0007669"/>
    <property type="project" value="UniProtKB-UniRule"/>
</dbReference>
<dbReference type="GO" id="GO:0006412">
    <property type="term" value="P:translation"/>
    <property type="evidence" value="ECO:0007669"/>
    <property type="project" value="UniProtKB-UniRule"/>
</dbReference>
<dbReference type="FunFam" id="3.30.70.600:FF:000003">
    <property type="entry name" value="30S ribosomal protein S10"/>
    <property type="match status" value="1"/>
</dbReference>
<dbReference type="Gene3D" id="3.30.70.600">
    <property type="entry name" value="Ribosomal protein S10 domain"/>
    <property type="match status" value="1"/>
</dbReference>
<dbReference type="HAMAP" id="MF_00508">
    <property type="entry name" value="Ribosomal_uS10"/>
    <property type="match status" value="1"/>
</dbReference>
<dbReference type="InterPro" id="IPR001848">
    <property type="entry name" value="Ribosomal_uS10"/>
</dbReference>
<dbReference type="InterPro" id="IPR018268">
    <property type="entry name" value="Ribosomal_uS10_CS"/>
</dbReference>
<dbReference type="InterPro" id="IPR027486">
    <property type="entry name" value="Ribosomal_uS10_dom"/>
</dbReference>
<dbReference type="InterPro" id="IPR036838">
    <property type="entry name" value="Ribosomal_uS10_dom_sf"/>
</dbReference>
<dbReference type="NCBIfam" id="NF001861">
    <property type="entry name" value="PRK00596.1"/>
    <property type="match status" value="1"/>
</dbReference>
<dbReference type="NCBIfam" id="TIGR01049">
    <property type="entry name" value="rpsJ_bact"/>
    <property type="match status" value="1"/>
</dbReference>
<dbReference type="PANTHER" id="PTHR11700">
    <property type="entry name" value="30S RIBOSOMAL PROTEIN S10 FAMILY MEMBER"/>
    <property type="match status" value="1"/>
</dbReference>
<dbReference type="Pfam" id="PF00338">
    <property type="entry name" value="Ribosomal_S10"/>
    <property type="match status" value="1"/>
</dbReference>
<dbReference type="PRINTS" id="PR00971">
    <property type="entry name" value="RIBOSOMALS10"/>
</dbReference>
<dbReference type="SMART" id="SM01403">
    <property type="entry name" value="Ribosomal_S10"/>
    <property type="match status" value="1"/>
</dbReference>
<dbReference type="SUPFAM" id="SSF54999">
    <property type="entry name" value="Ribosomal protein S10"/>
    <property type="match status" value="1"/>
</dbReference>
<dbReference type="PROSITE" id="PS00361">
    <property type="entry name" value="RIBOSOMAL_S10"/>
    <property type="match status" value="1"/>
</dbReference>
<name>RS10_SULNB</name>